<accession>Q5U1Y1</accession>
<sequence>MNILAPVRRDRVLAELPQCLKKEAALHVRKDFHPRVTCACQEHRTGTVGFKISKVIVVGDLSVGKTCLINRFCKDTFDKNYKATIGVDFEMERFEVLGVPFSLQLWDTAGQERFKCIASTYYRGAQAIIIVFNLNDVASLEHSKQWLADALKENDPSNVLLFLVGSKKDLSTPAQYSLMEKDALKVAQEIKAEYWSVSSLTGENVREFFFRVAALTFEANVLAELEKSGSRHIGDVVRINSDDKNLYLTASKKKATCCP</sequence>
<comment type="function">
    <text evidence="1 2 3">The small GTPases Rab are key regulators of intracellular membrane trafficking, from the formation of transport vesicles to their fusion with membranes. Rabs cycle between an inactive GDP-bound form and an active GTP-bound form that is able to recruit to membranes different sets of downstream effectors directly responsible for vesicle formation, movement, tethering and fusion (By similarity). RAB34 transports protein involved in the redistribution of lysosomes to the peri-Golgi region. Plays a role in the maturation of phagosomes that engulf pathogens, such as S.aureus and M.tuberculosis. Plays a role in the fusion of phagosomes with lysosomes. Involved in ciliogenesis (By similarity). In particular, it is required for early steps of the intracellular cilium assembly pathway initiated by trafficking and docking of ciliary vesicles to the centrioles in the cytoplasm, followed by axoneme formation in the cytoplasm. After axoneme elongation, the centrioles migrate close to the cell surface so that ciliary vesicles can fuse with the plasma membrane to expose cilia to the extracellular space (By similarity). It seems dispensable for ciliogenesis via the extracellular pathway where cilium assembly begins after migration and docking of the centriole to the plasma membrane (By similarity). Also acts as a positive regulator of hedgehog signaling and regulates ciliary function (By similarity).</text>
</comment>
<comment type="catalytic activity">
    <reaction evidence="1">
        <text>GTP + H2O = GDP + phosphate + H(+)</text>
        <dbReference type="Rhea" id="RHEA:19669"/>
        <dbReference type="ChEBI" id="CHEBI:15377"/>
        <dbReference type="ChEBI" id="CHEBI:15378"/>
        <dbReference type="ChEBI" id="CHEBI:37565"/>
        <dbReference type="ChEBI" id="CHEBI:43474"/>
        <dbReference type="ChEBI" id="CHEBI:58189"/>
        <dbReference type="EC" id="3.6.5.2"/>
    </reaction>
    <physiologicalReaction direction="left-to-right" evidence="1">
        <dbReference type="Rhea" id="RHEA:19670"/>
    </physiologicalReaction>
</comment>
<comment type="cofactor">
    <cofactor evidence="1">
        <name>Mg(2+)</name>
        <dbReference type="ChEBI" id="CHEBI:18420"/>
    </cofactor>
</comment>
<comment type="activity regulation">
    <text evidence="5">Regulated by guanine nucleotide exchange factors (GEFs) which promote the exchange of bound GDP for free GTP. Regulated by GTPase activating proteins (GAPs) which increase the GTP hydrolysis activity. Inhibited by GDP dissociation inhibitors (GDIs).</text>
</comment>
<comment type="subunit">
    <text evidence="3">Interacts with RILP. The GTP-bound form interacts with REP15 (By similarity).</text>
</comment>
<comment type="subcellular location">
    <subcellularLocation>
        <location evidence="2">Cytoplasm</location>
    </subcellularLocation>
    <subcellularLocation>
        <location evidence="2">Golgi apparatus</location>
    </subcellularLocation>
    <subcellularLocation>
        <location evidence="3">Cytoplasmic vesicle</location>
        <location evidence="3">Phagosome</location>
    </subcellularLocation>
    <subcellularLocation>
        <location evidence="3">Cytoplasmic vesicle</location>
        <location evidence="3">Phagosome membrane</location>
        <topology evidence="3">Lipid-anchor</topology>
        <orientation evidence="3">Cytoplasmic side</orientation>
    </subcellularLocation>
    <subcellularLocation>
        <location evidence="2">Cell projection</location>
        <location evidence="2">Cilium</location>
    </subcellularLocation>
    <subcellularLocation>
        <location evidence="3">Cytoplasm</location>
        <location evidence="3">Cytoskeleton</location>
        <location evidence="3">Microtubule organizing center</location>
        <location evidence="3">Centrosome</location>
        <location evidence="3">Centriole</location>
    </subcellularLocation>
    <subcellularLocation>
        <location evidence="2">Cytoplasm</location>
        <location evidence="2">Cytoskeleton</location>
        <location evidence="2">Microtubule organizing center</location>
        <location evidence="2">Centrosome</location>
    </subcellularLocation>
    <text evidence="3">Recruited to phagosomes containing S.aureus or Mycobacterium.</text>
</comment>
<comment type="domain">
    <text evidence="1">Switch 1, switch 2 and the interswitch regions are characteristic of Rab GTPases and mediate the interactions with Rab downstream effectors. The switch regions undergo conformational changes upon nucleotide binding which drives interaction with specific sets of effector proteins, with most effectors only binding to GTP-bound Rab.</text>
</comment>
<comment type="similarity">
    <text evidence="5">Belongs to the small GTPase superfamily. Rab family.</text>
</comment>
<dbReference type="EC" id="3.6.5.2" evidence="1"/>
<dbReference type="EMBL" id="BC086400">
    <property type="protein sequence ID" value="AAH86400.1"/>
    <property type="molecule type" value="mRNA"/>
</dbReference>
<dbReference type="RefSeq" id="NP_001012140.1">
    <property type="nucleotide sequence ID" value="NM_001012140.1"/>
</dbReference>
<dbReference type="SMR" id="Q5U1Y1"/>
<dbReference type="FunCoup" id="Q5U1Y1">
    <property type="interactions" value="478"/>
</dbReference>
<dbReference type="IntAct" id="Q5U1Y1">
    <property type="interactions" value="1"/>
</dbReference>
<dbReference type="STRING" id="10116.ENSRNOP00000074050"/>
<dbReference type="iPTMnet" id="Q5U1Y1"/>
<dbReference type="PhosphoSitePlus" id="Q5U1Y1"/>
<dbReference type="jPOST" id="Q5U1Y1"/>
<dbReference type="PaxDb" id="10116-ENSRNOP00000036566"/>
<dbReference type="Ensembl" id="ENSRNOT00000037016.7">
    <property type="protein sequence ID" value="ENSRNOP00000036566.7"/>
    <property type="gene ID" value="ENSRNOG00000023375.7"/>
</dbReference>
<dbReference type="GeneID" id="360571"/>
<dbReference type="KEGG" id="rno:360571"/>
<dbReference type="AGR" id="RGD:1305058"/>
<dbReference type="CTD" id="83871"/>
<dbReference type="RGD" id="1305058">
    <property type="gene designation" value="Rab34"/>
</dbReference>
<dbReference type="eggNOG" id="KOG0094">
    <property type="taxonomic scope" value="Eukaryota"/>
</dbReference>
<dbReference type="InParanoid" id="Q5U1Y1"/>
<dbReference type="PhylomeDB" id="Q5U1Y1"/>
<dbReference type="TreeFam" id="TF326626"/>
<dbReference type="Reactome" id="R-RNO-8873719">
    <property type="pathway name" value="RAB geranylgeranylation"/>
</dbReference>
<dbReference type="PRO" id="PR:Q5U1Y1"/>
<dbReference type="Proteomes" id="UP000002494">
    <property type="component" value="Chromosome 10"/>
</dbReference>
<dbReference type="GO" id="GO:0005814">
    <property type="term" value="C:centriole"/>
    <property type="evidence" value="ECO:0000250"/>
    <property type="project" value="UniProtKB"/>
</dbReference>
<dbReference type="GO" id="GO:0005813">
    <property type="term" value="C:centrosome"/>
    <property type="evidence" value="ECO:0007669"/>
    <property type="project" value="UniProtKB-SubCell"/>
</dbReference>
<dbReference type="GO" id="GO:0005929">
    <property type="term" value="C:cilium"/>
    <property type="evidence" value="ECO:0007669"/>
    <property type="project" value="UniProtKB-SubCell"/>
</dbReference>
<dbReference type="GO" id="GO:0031410">
    <property type="term" value="C:cytoplasmic vesicle"/>
    <property type="evidence" value="ECO:0000266"/>
    <property type="project" value="RGD"/>
</dbReference>
<dbReference type="GO" id="GO:0005769">
    <property type="term" value="C:early endosome"/>
    <property type="evidence" value="ECO:0000266"/>
    <property type="project" value="RGD"/>
</dbReference>
<dbReference type="GO" id="GO:0005794">
    <property type="term" value="C:Golgi apparatus"/>
    <property type="evidence" value="ECO:0000266"/>
    <property type="project" value="RGD"/>
</dbReference>
<dbReference type="GO" id="GO:0031985">
    <property type="term" value="C:Golgi cisterna"/>
    <property type="evidence" value="ECO:0000266"/>
    <property type="project" value="RGD"/>
</dbReference>
<dbReference type="GO" id="GO:0005795">
    <property type="term" value="C:Golgi stack"/>
    <property type="evidence" value="ECO:0000266"/>
    <property type="project" value="RGD"/>
</dbReference>
<dbReference type="GO" id="GO:0005770">
    <property type="term" value="C:late endosome"/>
    <property type="evidence" value="ECO:0000266"/>
    <property type="project" value="RGD"/>
</dbReference>
<dbReference type="GO" id="GO:0048471">
    <property type="term" value="C:perinuclear region of cytoplasm"/>
    <property type="evidence" value="ECO:0000266"/>
    <property type="project" value="RGD"/>
</dbReference>
<dbReference type="GO" id="GO:0045335">
    <property type="term" value="C:phagocytic vesicle"/>
    <property type="evidence" value="ECO:0000250"/>
    <property type="project" value="UniProtKB"/>
</dbReference>
<dbReference type="GO" id="GO:0030670">
    <property type="term" value="C:phagocytic vesicle membrane"/>
    <property type="evidence" value="ECO:0007669"/>
    <property type="project" value="UniProtKB-SubCell"/>
</dbReference>
<dbReference type="GO" id="GO:0001726">
    <property type="term" value="C:ruffle"/>
    <property type="evidence" value="ECO:0000266"/>
    <property type="project" value="RGD"/>
</dbReference>
<dbReference type="GO" id="GO:0031982">
    <property type="term" value="C:vesicle"/>
    <property type="evidence" value="ECO:0000266"/>
    <property type="project" value="RGD"/>
</dbReference>
<dbReference type="GO" id="GO:0005525">
    <property type="term" value="F:GTP binding"/>
    <property type="evidence" value="ECO:0000318"/>
    <property type="project" value="GO_Central"/>
</dbReference>
<dbReference type="GO" id="GO:0030742">
    <property type="term" value="F:GTP-dependent protein binding"/>
    <property type="evidence" value="ECO:0000266"/>
    <property type="project" value="RGD"/>
</dbReference>
<dbReference type="GO" id="GO:0003924">
    <property type="term" value="F:GTPase activity"/>
    <property type="evidence" value="ECO:0000266"/>
    <property type="project" value="RGD"/>
</dbReference>
<dbReference type="GO" id="GO:0019001">
    <property type="term" value="F:guanyl nucleotide binding"/>
    <property type="evidence" value="ECO:0000266"/>
    <property type="project" value="RGD"/>
</dbReference>
<dbReference type="GO" id="GO:0031267">
    <property type="term" value="F:small GTPase binding"/>
    <property type="evidence" value="ECO:0000266"/>
    <property type="project" value="RGD"/>
</dbReference>
<dbReference type="GO" id="GO:0019882">
    <property type="term" value="P:antigen processing and presentation"/>
    <property type="evidence" value="ECO:0000266"/>
    <property type="project" value="RGD"/>
</dbReference>
<dbReference type="GO" id="GO:0071333">
    <property type="term" value="P:cellular response to glucose stimulus"/>
    <property type="evidence" value="ECO:0000315"/>
    <property type="project" value="ParkinsonsUK-UCL"/>
</dbReference>
<dbReference type="GO" id="GO:0060271">
    <property type="term" value="P:cilium assembly"/>
    <property type="evidence" value="ECO:0000250"/>
    <property type="project" value="UniProtKB"/>
</dbReference>
<dbReference type="GO" id="GO:0061824">
    <property type="term" value="P:cytosolic ciliogenesis"/>
    <property type="evidence" value="ECO:0000250"/>
    <property type="project" value="UniProtKB"/>
</dbReference>
<dbReference type="GO" id="GO:0006897">
    <property type="term" value="P:endocytosis"/>
    <property type="evidence" value="ECO:0000266"/>
    <property type="project" value="RGD"/>
</dbReference>
<dbReference type="GO" id="GO:0043001">
    <property type="term" value="P:Golgi to plasma membrane protein transport"/>
    <property type="evidence" value="ECO:0000266"/>
    <property type="project" value="RGD"/>
</dbReference>
<dbReference type="GO" id="GO:0007041">
    <property type="term" value="P:lysosomal transport"/>
    <property type="evidence" value="ECO:0000266"/>
    <property type="project" value="RGD"/>
</dbReference>
<dbReference type="GO" id="GO:0032418">
    <property type="term" value="P:lysosome localization"/>
    <property type="evidence" value="ECO:0000266"/>
    <property type="project" value="RGD"/>
</dbReference>
<dbReference type="GO" id="GO:0090382">
    <property type="term" value="P:phagosome maturation"/>
    <property type="evidence" value="ECO:0000250"/>
    <property type="project" value="UniProtKB"/>
</dbReference>
<dbReference type="GO" id="GO:0090385">
    <property type="term" value="P:phagosome-lysosome fusion"/>
    <property type="evidence" value="ECO:0000250"/>
    <property type="project" value="UniProtKB"/>
</dbReference>
<dbReference type="GO" id="GO:1900426">
    <property type="term" value="P:positive regulation of defense response to bacterium"/>
    <property type="evidence" value="ECO:0000266"/>
    <property type="project" value="RGD"/>
</dbReference>
<dbReference type="GO" id="GO:1905171">
    <property type="term" value="P:positive regulation of protein localization to phagocytic vesicle"/>
    <property type="evidence" value="ECO:0000266"/>
    <property type="project" value="RGD"/>
</dbReference>
<dbReference type="GO" id="GO:0050714">
    <property type="term" value="P:positive regulation of protein secretion"/>
    <property type="evidence" value="ECO:0000315"/>
    <property type="project" value="ParkinsonsUK-UCL"/>
</dbReference>
<dbReference type="GO" id="GO:0045880">
    <property type="term" value="P:positive regulation of smoothened signaling pathway"/>
    <property type="evidence" value="ECO:0000250"/>
    <property type="project" value="UniProtKB"/>
</dbReference>
<dbReference type="GO" id="GO:0072659">
    <property type="term" value="P:protein localization to plasma membrane"/>
    <property type="evidence" value="ECO:0000266"/>
    <property type="project" value="RGD"/>
</dbReference>
<dbReference type="CDD" id="cd04108">
    <property type="entry name" value="Rab36_Rab34"/>
    <property type="match status" value="1"/>
</dbReference>
<dbReference type="FunFam" id="3.40.50.300:FF:000748">
    <property type="entry name" value="ras-related protein Rab-34 isoform X2"/>
    <property type="match status" value="1"/>
</dbReference>
<dbReference type="Gene3D" id="3.40.50.300">
    <property type="entry name" value="P-loop containing nucleotide triphosphate hydrolases"/>
    <property type="match status" value="1"/>
</dbReference>
<dbReference type="InterPro" id="IPR027417">
    <property type="entry name" value="P-loop_NTPase"/>
</dbReference>
<dbReference type="InterPro" id="IPR050227">
    <property type="entry name" value="Rab"/>
</dbReference>
<dbReference type="InterPro" id="IPR005225">
    <property type="entry name" value="Small_GTP-bd"/>
</dbReference>
<dbReference type="InterPro" id="IPR001806">
    <property type="entry name" value="Small_GTPase"/>
</dbReference>
<dbReference type="NCBIfam" id="TIGR00231">
    <property type="entry name" value="small_GTP"/>
    <property type="match status" value="1"/>
</dbReference>
<dbReference type="PANTHER" id="PTHR47977">
    <property type="entry name" value="RAS-RELATED PROTEIN RAB"/>
    <property type="match status" value="1"/>
</dbReference>
<dbReference type="Pfam" id="PF00071">
    <property type="entry name" value="Ras"/>
    <property type="match status" value="1"/>
</dbReference>
<dbReference type="PRINTS" id="PR00449">
    <property type="entry name" value="RASTRNSFRMNG"/>
</dbReference>
<dbReference type="SMART" id="SM00175">
    <property type="entry name" value="RAB"/>
    <property type="match status" value="1"/>
</dbReference>
<dbReference type="SMART" id="SM00176">
    <property type="entry name" value="RAN"/>
    <property type="match status" value="1"/>
</dbReference>
<dbReference type="SMART" id="SM00173">
    <property type="entry name" value="RAS"/>
    <property type="match status" value="1"/>
</dbReference>
<dbReference type="SMART" id="SM00174">
    <property type="entry name" value="RHO"/>
    <property type="match status" value="1"/>
</dbReference>
<dbReference type="SUPFAM" id="SSF52540">
    <property type="entry name" value="P-loop containing nucleoside triphosphate hydrolases"/>
    <property type="match status" value="1"/>
</dbReference>
<dbReference type="PROSITE" id="PS51419">
    <property type="entry name" value="RAB"/>
    <property type="match status" value="1"/>
</dbReference>
<organism>
    <name type="scientific">Rattus norvegicus</name>
    <name type="common">Rat</name>
    <dbReference type="NCBI Taxonomy" id="10116"/>
    <lineage>
        <taxon>Eukaryota</taxon>
        <taxon>Metazoa</taxon>
        <taxon>Chordata</taxon>
        <taxon>Craniata</taxon>
        <taxon>Vertebrata</taxon>
        <taxon>Euteleostomi</taxon>
        <taxon>Mammalia</taxon>
        <taxon>Eutheria</taxon>
        <taxon>Euarchontoglires</taxon>
        <taxon>Glires</taxon>
        <taxon>Rodentia</taxon>
        <taxon>Myomorpha</taxon>
        <taxon>Muroidea</taxon>
        <taxon>Muridae</taxon>
        <taxon>Murinae</taxon>
        <taxon>Rattus</taxon>
    </lineage>
</organism>
<evidence type="ECO:0000250" key="1">
    <source>
        <dbReference type="UniProtKB" id="P20340"/>
    </source>
</evidence>
<evidence type="ECO:0000250" key="2">
    <source>
        <dbReference type="UniProtKB" id="Q64008"/>
    </source>
</evidence>
<evidence type="ECO:0000250" key="3">
    <source>
        <dbReference type="UniProtKB" id="Q9BZG1"/>
    </source>
</evidence>
<evidence type="ECO:0000255" key="4"/>
<evidence type="ECO:0000305" key="5"/>
<evidence type="ECO:0000312" key="6">
    <source>
        <dbReference type="RGD" id="1305058"/>
    </source>
</evidence>
<reference key="1">
    <citation type="journal article" date="2004" name="Genome Res.">
        <title>The status, quality, and expansion of the NIH full-length cDNA project: the Mammalian Gene Collection (MGC).</title>
        <authorList>
            <consortium name="The MGC Project Team"/>
        </authorList>
    </citation>
    <scope>NUCLEOTIDE SEQUENCE [LARGE SCALE MRNA]</scope>
    <source>
        <tissue>Ovary</tissue>
    </source>
</reference>
<proteinExistence type="evidence at transcript level"/>
<name>RAB34_RAT</name>
<protein>
    <recommendedName>
        <fullName>Ras-related protein Rab-34</fullName>
        <ecNumber evidence="1">3.6.5.2</ecNumber>
    </recommendedName>
</protein>
<gene>
    <name evidence="6" type="primary">Rab34</name>
</gene>
<feature type="chain" id="PRO_0000315238" description="Ras-related protein Rab-34">
    <location>
        <begin position="1"/>
        <end position="259"/>
    </location>
</feature>
<feature type="short sequence motif" description="Switch 1" evidence="1">
    <location>
        <begin position="71"/>
        <end position="89"/>
    </location>
</feature>
<feature type="short sequence motif" description="Switch 2" evidence="1">
    <location>
        <begin position="108"/>
        <end position="127"/>
    </location>
</feature>
<feature type="binding site" evidence="1">
    <location>
        <position position="62"/>
    </location>
    <ligand>
        <name>GTP</name>
        <dbReference type="ChEBI" id="CHEBI:37565"/>
    </ligand>
</feature>
<feature type="binding site" evidence="1">
    <location>
        <position position="63"/>
    </location>
    <ligand>
        <name>GTP</name>
        <dbReference type="ChEBI" id="CHEBI:37565"/>
    </ligand>
</feature>
<feature type="binding site" evidence="1">
    <location>
        <position position="64"/>
    </location>
    <ligand>
        <name>GTP</name>
        <dbReference type="ChEBI" id="CHEBI:37565"/>
    </ligand>
</feature>
<feature type="binding site" evidence="1">
    <location>
        <position position="65"/>
    </location>
    <ligand>
        <name>GTP</name>
        <dbReference type="ChEBI" id="CHEBI:37565"/>
    </ligand>
</feature>
<feature type="binding site" evidence="1">
    <location>
        <position position="66"/>
    </location>
    <ligand>
        <name>GTP</name>
        <dbReference type="ChEBI" id="CHEBI:37565"/>
    </ligand>
</feature>
<feature type="binding site" evidence="1">
    <location>
        <position position="66"/>
    </location>
    <ligand>
        <name>Mg(2+)</name>
        <dbReference type="ChEBI" id="CHEBI:18420"/>
    </ligand>
</feature>
<feature type="binding site" evidence="1">
    <location>
        <position position="78"/>
    </location>
    <ligand>
        <name>GTP</name>
        <dbReference type="ChEBI" id="CHEBI:37565"/>
    </ligand>
</feature>
<feature type="binding site" evidence="1">
    <location>
        <position position="81"/>
    </location>
    <ligand>
        <name>GTP</name>
        <dbReference type="ChEBI" id="CHEBI:37565"/>
    </ligand>
</feature>
<feature type="binding site" evidence="1">
    <location>
        <position position="84"/>
    </location>
    <ligand>
        <name>GTP</name>
        <dbReference type="ChEBI" id="CHEBI:37565"/>
    </ligand>
</feature>
<feature type="binding site" evidence="1">
    <location>
        <position position="84"/>
    </location>
    <ligand>
        <name>Mg(2+)</name>
        <dbReference type="ChEBI" id="CHEBI:18420"/>
    </ligand>
</feature>
<feature type="binding site" evidence="1">
    <location>
        <position position="107"/>
    </location>
    <ligand>
        <name>Mg(2+)</name>
        <dbReference type="ChEBI" id="CHEBI:18420"/>
    </ligand>
</feature>
<feature type="binding site" evidence="1">
    <location>
        <position position="110"/>
    </location>
    <ligand>
        <name>GTP</name>
        <dbReference type="ChEBI" id="CHEBI:37565"/>
    </ligand>
</feature>
<feature type="binding site" evidence="1">
    <location>
        <position position="167"/>
    </location>
    <ligand>
        <name>GTP</name>
        <dbReference type="ChEBI" id="CHEBI:37565"/>
    </ligand>
</feature>
<feature type="binding site" evidence="1">
    <location>
        <position position="169"/>
    </location>
    <ligand>
        <name>GTP</name>
        <dbReference type="ChEBI" id="CHEBI:37565"/>
    </ligand>
</feature>
<feature type="binding site" evidence="1">
    <location>
        <position position="198"/>
    </location>
    <ligand>
        <name>GTP</name>
        <dbReference type="ChEBI" id="CHEBI:37565"/>
    </ligand>
</feature>
<feature type="modified residue" description="N-acetylmethionine" evidence="3">
    <location>
        <position position="1"/>
    </location>
</feature>
<feature type="modified residue" description="Phosphoserine" evidence="3">
    <location>
        <position position="241"/>
    </location>
</feature>
<feature type="lipid moiety-binding region" description="S-geranylgeranyl cysteine" evidence="4">
    <location>
        <position position="257"/>
    </location>
</feature>
<feature type="lipid moiety-binding region" description="S-geranylgeranyl cysteine" evidence="4">
    <location>
        <position position="258"/>
    </location>
</feature>
<keyword id="KW-0007">Acetylation</keyword>
<keyword id="KW-0966">Cell projection</keyword>
<keyword id="KW-0970">Cilium biogenesis/degradation</keyword>
<keyword id="KW-0963">Cytoplasm</keyword>
<keyword id="KW-0968">Cytoplasmic vesicle</keyword>
<keyword id="KW-0206">Cytoskeleton</keyword>
<keyword id="KW-0333">Golgi apparatus</keyword>
<keyword id="KW-0342">GTP-binding</keyword>
<keyword id="KW-0378">Hydrolase</keyword>
<keyword id="KW-0449">Lipoprotein</keyword>
<keyword id="KW-0460">Magnesium</keyword>
<keyword id="KW-0472">Membrane</keyword>
<keyword id="KW-0479">Metal-binding</keyword>
<keyword id="KW-0547">Nucleotide-binding</keyword>
<keyword id="KW-0597">Phosphoprotein</keyword>
<keyword id="KW-0636">Prenylation</keyword>
<keyword id="KW-0653">Protein transport</keyword>
<keyword id="KW-1185">Reference proteome</keyword>
<keyword id="KW-0813">Transport</keyword>